<reference key="1">
    <citation type="journal article" date="2009" name="Genome Res.">
        <title>Comparative genomics of protoploid Saccharomycetaceae.</title>
        <authorList>
            <consortium name="The Genolevures Consortium"/>
            <person name="Souciet J.-L."/>
            <person name="Dujon B."/>
            <person name="Gaillardin C."/>
            <person name="Johnston M."/>
            <person name="Baret P.V."/>
            <person name="Cliften P."/>
            <person name="Sherman D.J."/>
            <person name="Weissenbach J."/>
            <person name="Westhof E."/>
            <person name="Wincker P."/>
            <person name="Jubin C."/>
            <person name="Poulain J."/>
            <person name="Barbe V."/>
            <person name="Segurens B."/>
            <person name="Artiguenave F."/>
            <person name="Anthouard V."/>
            <person name="Vacherie B."/>
            <person name="Val M.-E."/>
            <person name="Fulton R.S."/>
            <person name="Minx P."/>
            <person name="Wilson R."/>
            <person name="Durrens P."/>
            <person name="Jean G."/>
            <person name="Marck C."/>
            <person name="Martin T."/>
            <person name="Nikolski M."/>
            <person name="Rolland T."/>
            <person name="Seret M.-L."/>
            <person name="Casaregola S."/>
            <person name="Despons L."/>
            <person name="Fairhead C."/>
            <person name="Fischer G."/>
            <person name="Lafontaine I."/>
            <person name="Leh V."/>
            <person name="Lemaire M."/>
            <person name="de Montigny J."/>
            <person name="Neuveglise C."/>
            <person name="Thierry A."/>
            <person name="Blanc-Lenfle I."/>
            <person name="Bleykasten C."/>
            <person name="Diffels J."/>
            <person name="Fritsch E."/>
            <person name="Frangeul L."/>
            <person name="Goeffon A."/>
            <person name="Jauniaux N."/>
            <person name="Kachouri-Lafond R."/>
            <person name="Payen C."/>
            <person name="Potier S."/>
            <person name="Pribylova L."/>
            <person name="Ozanne C."/>
            <person name="Richard G.-F."/>
            <person name="Sacerdot C."/>
            <person name="Straub M.-L."/>
            <person name="Talla E."/>
        </authorList>
    </citation>
    <scope>NUCLEOTIDE SEQUENCE [LARGE SCALE GENOMIC DNA]</scope>
    <source>
        <strain>ATCC 56472 / CBS 6340 / NRRL Y-8284</strain>
    </source>
</reference>
<feature type="transit peptide" description="Mitochondrion" evidence="2">
    <location>
        <begin position="1"/>
        <end position="38"/>
    </location>
</feature>
<feature type="chain" id="PRO_0000409636" description="Genetic interactor of prohibitins 3, mitochondrial">
    <location>
        <begin position="39"/>
        <end position="535"/>
    </location>
</feature>
<feature type="domain" description="CP-type G" evidence="3">
    <location>
        <begin position="111"/>
        <end position="283"/>
    </location>
</feature>
<organism>
    <name type="scientific">Lachancea thermotolerans (strain ATCC 56472 / CBS 6340 / NRRL Y-8284)</name>
    <name type="common">Yeast</name>
    <name type="synonym">Kluyveromyces thermotolerans</name>
    <dbReference type="NCBI Taxonomy" id="559295"/>
    <lineage>
        <taxon>Eukaryota</taxon>
        <taxon>Fungi</taxon>
        <taxon>Dikarya</taxon>
        <taxon>Ascomycota</taxon>
        <taxon>Saccharomycotina</taxon>
        <taxon>Saccharomycetes</taxon>
        <taxon>Saccharomycetales</taxon>
        <taxon>Saccharomycetaceae</taxon>
        <taxon>Lachancea</taxon>
    </lineage>
</organism>
<name>GEP3_LACTC</name>
<comment type="function">
    <text evidence="1">May be involved in the mitochondrial lipid metabolism.</text>
</comment>
<comment type="subcellular location">
    <subcellularLocation>
        <location evidence="1">Mitochondrion</location>
    </subcellularLocation>
</comment>
<comment type="similarity">
    <text evidence="3">Belongs to the TRAFAC class YlqF/YawG GTPase family. GEP3 subfamily.</text>
</comment>
<dbReference type="EMBL" id="CU928168">
    <property type="protein sequence ID" value="CAR22701.1"/>
    <property type="molecule type" value="Genomic_DNA"/>
</dbReference>
<dbReference type="RefSeq" id="XP_002553139.1">
    <property type="nucleotide sequence ID" value="XM_002553093.1"/>
</dbReference>
<dbReference type="SMR" id="C5DEU6"/>
<dbReference type="FunCoup" id="C5DEU6">
    <property type="interactions" value="109"/>
</dbReference>
<dbReference type="STRING" id="559295.C5DEU6"/>
<dbReference type="GeneID" id="8295378"/>
<dbReference type="KEGG" id="lth:KLTH0D09878g"/>
<dbReference type="eggNOG" id="ENOG502S0UP">
    <property type="taxonomic scope" value="Eukaryota"/>
</dbReference>
<dbReference type="HOGENOM" id="CLU_025792_1_0_1"/>
<dbReference type="InParanoid" id="C5DEU6"/>
<dbReference type="OMA" id="IIPPFYG"/>
<dbReference type="OrthoDB" id="1696305at2759"/>
<dbReference type="Proteomes" id="UP000002036">
    <property type="component" value="Chromosome D"/>
</dbReference>
<dbReference type="GO" id="GO:0005739">
    <property type="term" value="C:mitochondrion"/>
    <property type="evidence" value="ECO:0007669"/>
    <property type="project" value="UniProtKB-SubCell"/>
</dbReference>
<dbReference type="GO" id="GO:0005525">
    <property type="term" value="F:GTP binding"/>
    <property type="evidence" value="ECO:0007669"/>
    <property type="project" value="InterPro"/>
</dbReference>
<dbReference type="Gene3D" id="3.40.50.300">
    <property type="entry name" value="P-loop containing nucleotide triphosphate hydrolases"/>
    <property type="match status" value="1"/>
</dbReference>
<dbReference type="InterPro" id="IPR030378">
    <property type="entry name" value="G_CP_dom"/>
</dbReference>
<dbReference type="InterPro" id="IPR006073">
    <property type="entry name" value="GTP-bd"/>
</dbReference>
<dbReference type="InterPro" id="IPR050896">
    <property type="entry name" value="Mito_lipid_metab_GTPase"/>
</dbReference>
<dbReference type="InterPro" id="IPR027417">
    <property type="entry name" value="P-loop_NTPase"/>
</dbReference>
<dbReference type="PANTHER" id="PTHR46434">
    <property type="entry name" value="GENETIC INTERACTOR OF PROHIBITINS 3, MITOCHONDRIAL"/>
    <property type="match status" value="1"/>
</dbReference>
<dbReference type="PANTHER" id="PTHR46434:SF1">
    <property type="entry name" value="GENETIC INTERACTOR OF PROHIBITINS 3, MITOCHONDRIAL"/>
    <property type="match status" value="1"/>
</dbReference>
<dbReference type="Pfam" id="PF01926">
    <property type="entry name" value="MMR_HSR1"/>
    <property type="match status" value="1"/>
</dbReference>
<dbReference type="SUPFAM" id="SSF52540">
    <property type="entry name" value="P-loop containing nucleoside triphosphate hydrolases"/>
    <property type="match status" value="1"/>
</dbReference>
<dbReference type="PROSITE" id="PS51721">
    <property type="entry name" value="G_CP"/>
    <property type="match status" value="1"/>
</dbReference>
<protein>
    <recommendedName>
        <fullName>Genetic interactor of prohibitins 3, mitochondrial</fullName>
    </recommendedName>
    <alternativeName>
        <fullName>Found in mitochondrial proteome protein 38</fullName>
    </alternativeName>
</protein>
<keyword id="KW-0496">Mitochondrion</keyword>
<keyword id="KW-1185">Reference proteome</keyword>
<keyword id="KW-0809">Transit peptide</keyword>
<gene>
    <name type="primary">GEP3</name>
    <name type="synonym">FMP48</name>
    <name type="ordered locus">KLTH0D09878g</name>
</gene>
<evidence type="ECO:0000250" key="1"/>
<evidence type="ECO:0000255" key="2"/>
<evidence type="ECO:0000255" key="3">
    <source>
        <dbReference type="PROSITE-ProRule" id="PRU01058"/>
    </source>
</evidence>
<proteinExistence type="inferred from homology"/>
<accession>C5DEU6</accession>
<sequence length="535" mass="60679">MLPVSRLCVRSSLRKLVFVRFVSCTSCGVTLQNNNVRGTGFYTPPKAQIERKRPVIEDLKYLLFSQDLQSLKSELSAEERPKKNKPLICKRCNDALHHNTFSKEDFRRYSMQEVYRHVPAGADIYHVVPLTDFPLQLNSAVLKDSRYNSALLLSKGDQVTPDKSLLQRKAPQFFKDMLRLKMNYNSNKSIAFSASKGWNIQSVYSVLRSNSFLIGCPNSGKSTLVNALLKKFPSLKPSEGNNASEAEIVRGAGVSNIPNMTRDLQSYNIGSKVINDLPGYSTNYGSPGPEDALDAKVLEKIQKTHLFKKTKLVKQRYTSLKGTDAGRCYTVSGIFYLVPPPDTINQVVNYIPGNERQYRNIDKALSVVNSEHACPEKGPLRQYVGVQKAMESKDNYVRHVLPPFQGSIEVVLKEIGYFQLKTTGKYKFLGLHEVWVPKGVDVCIREPIARLIDEGYEGYLSSEGKKKAIPEKREVFSATYPMSFEETDTLQKMKEMFLERTKNDVLARKFISSNPLKIIGTAQKEAPNLYWYYKW</sequence>